<reference key="1">
    <citation type="journal article" date="2009" name="PLoS Genet.">
        <title>The complete genome and proteome of Laribacter hongkongensis reveal potential mechanisms for adaptations to different temperatures and habitats.</title>
        <authorList>
            <person name="Woo P.C.Y."/>
            <person name="Lau S.K.P."/>
            <person name="Tse H."/>
            <person name="Teng J.L.L."/>
            <person name="Curreem S.O."/>
            <person name="Tsang A.K.L."/>
            <person name="Fan R.Y.Y."/>
            <person name="Wong G.K.M."/>
            <person name="Huang Y."/>
            <person name="Loman N.J."/>
            <person name="Snyder L.A.S."/>
            <person name="Cai J.J."/>
            <person name="Huang J.-D."/>
            <person name="Mak W."/>
            <person name="Pallen M.J."/>
            <person name="Lok S."/>
            <person name="Yuen K.-Y."/>
        </authorList>
    </citation>
    <scope>NUCLEOTIDE SEQUENCE [LARGE SCALE GENOMIC DNA]</scope>
    <source>
        <strain>HLHK9</strain>
    </source>
</reference>
<feature type="chain" id="PRO_1000166235" description="Large ribosomal subunit protein uL18">
    <location>
        <begin position="1"/>
        <end position="117"/>
    </location>
</feature>
<organism>
    <name type="scientific">Laribacter hongkongensis (strain HLHK9)</name>
    <dbReference type="NCBI Taxonomy" id="557598"/>
    <lineage>
        <taxon>Bacteria</taxon>
        <taxon>Pseudomonadati</taxon>
        <taxon>Pseudomonadota</taxon>
        <taxon>Betaproteobacteria</taxon>
        <taxon>Neisseriales</taxon>
        <taxon>Aquaspirillaceae</taxon>
        <taxon>Laribacter</taxon>
    </lineage>
</organism>
<protein>
    <recommendedName>
        <fullName evidence="1">Large ribosomal subunit protein uL18</fullName>
    </recommendedName>
    <alternativeName>
        <fullName evidence="2">50S ribosomal protein L18</fullName>
    </alternativeName>
</protein>
<gene>
    <name evidence="1" type="primary">rplR</name>
    <name type="ordered locus">LHK_00269</name>
</gene>
<keyword id="KW-1185">Reference proteome</keyword>
<keyword id="KW-0687">Ribonucleoprotein</keyword>
<keyword id="KW-0689">Ribosomal protein</keyword>
<keyword id="KW-0694">RNA-binding</keyword>
<keyword id="KW-0699">rRNA-binding</keyword>
<sequence>MDKKQARLRRARKTRARIAELKMARLSVHRTNCHIYAQIIDETGSRVLAQASTLEAEVKKELANGGNAGAAALIGKRIAEKAKAAGVEKVAFDRSGFQYHGRIKALADAARENGLAF</sequence>
<accession>C1DAT3</accession>
<evidence type="ECO:0000255" key="1">
    <source>
        <dbReference type="HAMAP-Rule" id="MF_01337"/>
    </source>
</evidence>
<evidence type="ECO:0000305" key="2"/>
<proteinExistence type="inferred from homology"/>
<comment type="function">
    <text evidence="1">This is one of the proteins that bind and probably mediate the attachment of the 5S RNA into the large ribosomal subunit, where it forms part of the central protuberance.</text>
</comment>
<comment type="subunit">
    <text evidence="1">Part of the 50S ribosomal subunit; part of the 5S rRNA/L5/L18/L25 subcomplex. Contacts the 5S and 23S rRNAs.</text>
</comment>
<comment type="similarity">
    <text evidence="1">Belongs to the universal ribosomal protein uL18 family.</text>
</comment>
<dbReference type="EMBL" id="CP001154">
    <property type="protein sequence ID" value="ACO73264.1"/>
    <property type="molecule type" value="Genomic_DNA"/>
</dbReference>
<dbReference type="RefSeq" id="WP_012695758.1">
    <property type="nucleotide sequence ID" value="NC_012559.1"/>
</dbReference>
<dbReference type="SMR" id="C1DAT3"/>
<dbReference type="STRING" id="557598.LHK_00269"/>
<dbReference type="GeneID" id="75109491"/>
<dbReference type="KEGG" id="lhk:LHK_00269"/>
<dbReference type="eggNOG" id="COG0256">
    <property type="taxonomic scope" value="Bacteria"/>
</dbReference>
<dbReference type="HOGENOM" id="CLU_098841_0_1_4"/>
<dbReference type="Proteomes" id="UP000002010">
    <property type="component" value="Chromosome"/>
</dbReference>
<dbReference type="GO" id="GO:0022625">
    <property type="term" value="C:cytosolic large ribosomal subunit"/>
    <property type="evidence" value="ECO:0007669"/>
    <property type="project" value="TreeGrafter"/>
</dbReference>
<dbReference type="GO" id="GO:0008097">
    <property type="term" value="F:5S rRNA binding"/>
    <property type="evidence" value="ECO:0007669"/>
    <property type="project" value="TreeGrafter"/>
</dbReference>
<dbReference type="GO" id="GO:0003735">
    <property type="term" value="F:structural constituent of ribosome"/>
    <property type="evidence" value="ECO:0007669"/>
    <property type="project" value="InterPro"/>
</dbReference>
<dbReference type="GO" id="GO:0006412">
    <property type="term" value="P:translation"/>
    <property type="evidence" value="ECO:0007669"/>
    <property type="project" value="UniProtKB-UniRule"/>
</dbReference>
<dbReference type="CDD" id="cd00432">
    <property type="entry name" value="Ribosomal_L18_L5e"/>
    <property type="match status" value="1"/>
</dbReference>
<dbReference type="FunFam" id="3.30.420.100:FF:000001">
    <property type="entry name" value="50S ribosomal protein L18"/>
    <property type="match status" value="1"/>
</dbReference>
<dbReference type="Gene3D" id="3.30.420.100">
    <property type="match status" value="1"/>
</dbReference>
<dbReference type="HAMAP" id="MF_01337_B">
    <property type="entry name" value="Ribosomal_uL18_B"/>
    <property type="match status" value="1"/>
</dbReference>
<dbReference type="InterPro" id="IPR004389">
    <property type="entry name" value="Ribosomal_uL18_bac-type"/>
</dbReference>
<dbReference type="InterPro" id="IPR005484">
    <property type="entry name" value="Ribosomal_uL18_bac/euk"/>
</dbReference>
<dbReference type="NCBIfam" id="TIGR00060">
    <property type="entry name" value="L18_bact"/>
    <property type="match status" value="1"/>
</dbReference>
<dbReference type="PANTHER" id="PTHR12899">
    <property type="entry name" value="39S RIBOSOMAL PROTEIN L18, MITOCHONDRIAL"/>
    <property type="match status" value="1"/>
</dbReference>
<dbReference type="PANTHER" id="PTHR12899:SF3">
    <property type="entry name" value="LARGE RIBOSOMAL SUBUNIT PROTEIN UL18M"/>
    <property type="match status" value="1"/>
</dbReference>
<dbReference type="Pfam" id="PF00861">
    <property type="entry name" value="Ribosomal_L18p"/>
    <property type="match status" value="1"/>
</dbReference>
<dbReference type="SUPFAM" id="SSF53137">
    <property type="entry name" value="Translational machinery components"/>
    <property type="match status" value="1"/>
</dbReference>
<name>RL18_LARHH</name>